<proteinExistence type="evidence at protein level"/>
<gene>
    <name evidence="11" type="primary">Astl</name>
    <name type="synonym">Sas1b</name>
</gene>
<feature type="signal peptide" evidence="2">
    <location>
        <begin position="1"/>
        <end position="23"/>
    </location>
</feature>
<feature type="chain" id="PRO_0000041965" description="Astacin-like metalloendopeptidase" evidence="2">
    <location>
        <begin position="24"/>
        <end position="435"/>
    </location>
</feature>
<feature type="domain" description="Peptidase M12A" evidence="3">
    <location>
        <begin position="85"/>
        <end position="282"/>
    </location>
</feature>
<feature type="region of interest" description="Disordered" evidence="4">
    <location>
        <begin position="318"/>
        <end position="356"/>
    </location>
</feature>
<feature type="compositionally biased region" description="Low complexity" evidence="4">
    <location>
        <begin position="318"/>
        <end position="329"/>
    </location>
</feature>
<feature type="compositionally biased region" description="Polar residues" evidence="4">
    <location>
        <begin position="340"/>
        <end position="355"/>
    </location>
</feature>
<feature type="active site" evidence="3">
    <location>
        <position position="183"/>
    </location>
</feature>
<feature type="binding site" evidence="3">
    <location>
        <position position="182"/>
    </location>
    <ligand>
        <name>Zn(2+)</name>
        <dbReference type="ChEBI" id="CHEBI:29105"/>
        <note>catalytic</note>
    </ligand>
</feature>
<feature type="binding site" evidence="3">
    <location>
        <position position="186"/>
    </location>
    <ligand>
        <name>Zn(2+)</name>
        <dbReference type="ChEBI" id="CHEBI:29105"/>
        <note>catalytic</note>
    </ligand>
</feature>
<feature type="binding site" evidence="3">
    <location>
        <position position="192"/>
    </location>
    <ligand>
        <name>Zn(2+)</name>
        <dbReference type="ChEBI" id="CHEBI:29105"/>
        <note>catalytic</note>
    </ligand>
</feature>
<feature type="disulfide bond" evidence="3">
    <location>
        <begin position="132"/>
        <end position="281"/>
    </location>
</feature>
<feature type="disulfide bond" evidence="3">
    <location>
        <begin position="153"/>
        <end position="172"/>
    </location>
</feature>
<feature type="splice variant" id="VSP_051832" description="In isoform 2, isoform 5 and isoform 6." evidence="8 9">
    <location>
        <begin position="1"/>
        <end position="21"/>
    </location>
</feature>
<feature type="splice variant" id="VSP_043997" description="In isoform 4 and isoform 6." evidence="9">
    <location>
        <begin position="72"/>
        <end position="105"/>
    </location>
</feature>
<feature type="splice variant" id="VSP_043998" description="In isoform 3." evidence="9">
    <original>SPFRLLSVTNNKWPKGVGGFVEIPFLLSRKYD</original>
    <variation>GVSHGVSFPN</variation>
    <location>
        <begin position="82"/>
        <end position="113"/>
    </location>
</feature>
<feature type="splice variant" id="VSP_043999" description="In isoform 5." evidence="9">
    <original>SPFRLLSVTNNKWPKGVGGFVEIPFLLSRKY</original>
    <variation>GVSHGVSFP</variation>
    <location>
        <begin position="82"/>
        <end position="112"/>
    </location>
</feature>
<comment type="function">
    <text evidence="5 7">Oocyte-specific oolemmal receptor involved in sperm and egg adhesion and fertilization. Plays a role in the polyspermy inhibition. Probably acts as a protease for the post-fertilization cleavage of ZP2. Cleaves the sperm-binding ZP2 at the surface of the zona pellucida after fertilization and cortical granule exocytosis, rendering the zona pellucida unable to support further sperm binding.</text>
</comment>
<comment type="cofactor">
    <cofactor evidence="3">
        <name>Zn(2+)</name>
        <dbReference type="ChEBI" id="CHEBI:29105"/>
    </cofactor>
    <text evidence="3">Binds 1 zinc ion per subunit.</text>
</comment>
<comment type="activity regulation">
    <text evidence="1">Inhibited by wide spectrum metalloproteinase inhibitor batimastat (BB-94). Also inhibited by EDTA (By similarity).</text>
</comment>
<comment type="subunit">
    <text evidence="5">Interacts (via N-terminal domain) with SPACA3; the interaction occurs during fertilization.</text>
</comment>
<comment type="subcellular location">
    <subcellularLocation>
        <location evidence="5 7">Cytoplasm</location>
    </subcellularLocation>
    <subcellularLocation>
        <location evidence="5">Cell membrane</location>
    </subcellularLocation>
    <subcellularLocation>
        <location evidence="7">Cytoplasmic vesicle</location>
        <location evidence="7">Secretory vesicle</location>
        <location evidence="7">Cortical granule</location>
    </subcellularLocation>
    <text evidence="7">Probably exocytosed from cortical granules during post-fertilization. Detected throughout the ooplasm of germinal vesicle stage oocytes in early bilaminar secondary follicles at postnatal (PN) day 3. Detected in the microvillar domain of the oolemma in arrested ovulated secondary oocytes and in the first polar body prior to fertilization. Upon fertilization, detected in the perivitelline space (PVS) and occasionally on the oolemma in 2-cell through morulae stages. Colocalizes with SPACA3 at the microvillar domain of the oolemma and in the perivitelline space (PVS).</text>
</comment>
<comment type="alternative products">
    <event type="alternative splicing"/>
    <isoform>
        <id>Q6HA09-1</id>
        <name>1</name>
        <name>V1</name>
        <sequence type="displayed"/>
    </isoform>
    <isoform>
        <id>Q6HA09-2</id>
        <name evidence="10">2</name>
        <name>V2</name>
        <sequence type="described" ref="VSP_051832"/>
    </isoform>
    <isoform>
        <id>Q6HA09-3</id>
        <name>3</name>
        <name>V6</name>
        <sequence type="described" ref="VSP_043998"/>
    </isoform>
    <isoform>
        <id>Q6HA09-4</id>
        <name>4</name>
        <name>V4</name>
        <sequence type="described" ref="VSP_043997"/>
    </isoform>
    <isoform>
        <id>Q6HA09-5</id>
        <name>5</name>
        <name>V5</name>
        <sequence type="described" ref="VSP_051832 VSP_043999"/>
    </isoform>
    <isoform>
        <id>Q6HA09-6</id>
        <name>6</name>
        <name>V3</name>
        <sequence type="described" ref="VSP_051832 VSP_043997"/>
    </isoform>
</comment>
<comment type="tissue specificity">
    <text evidence="5 7">Ovary-specific. Expressed in secondary, antral and Graafian follicle oocytes. Expressed in the egg cells. Not detected in two-cell embryos. Not detected in naked oocytes, oocytes in primordial or unilaminar primary follicles, or in any other ovarian cells at pre-pubertal, pubertal or adult stages (at protein level). Ovary-specific.</text>
</comment>
<comment type="developmental stage">
    <text evidence="6">Expressed in embryonic stem cells.</text>
</comment>
<comment type="disruption phenotype">
    <text evidence="5 7">Absence of cortical granules exocytosis during post-fertilization. Multiple capacitated sperm binding to eggs and two-cell embryos are not prevented. Post-fertilization cleavage of ZP2 does not occur.</text>
</comment>
<comment type="online information" name="Protein Spotlight">
    <link uri="https://www.proteinspotlight.org/back_issues/141"/>
    <text>Life's boundaries - Issue 141 of September 2012</text>
</comment>
<organism>
    <name type="scientific">Mus musculus</name>
    <name type="common">Mouse</name>
    <dbReference type="NCBI Taxonomy" id="10090"/>
    <lineage>
        <taxon>Eukaryota</taxon>
        <taxon>Metazoa</taxon>
        <taxon>Chordata</taxon>
        <taxon>Craniata</taxon>
        <taxon>Vertebrata</taxon>
        <taxon>Euteleostomi</taxon>
        <taxon>Mammalia</taxon>
        <taxon>Eutheria</taxon>
        <taxon>Euarchontoglires</taxon>
        <taxon>Glires</taxon>
        <taxon>Rodentia</taxon>
        <taxon>Myomorpha</taxon>
        <taxon>Muroidea</taxon>
        <taxon>Muridae</taxon>
        <taxon>Murinae</taxon>
        <taxon>Mus</taxon>
        <taxon>Mus</taxon>
    </lineage>
</organism>
<accession>Q6HA09</accession>
<accession>A2AHU0</accession>
<accession>A2AHU1</accession>
<accession>G7Z016</accession>
<accession>G7Z017</accession>
<accession>G7Z018</accession>
<accession>G7Z019</accession>
<accession>Q8BMA1</accession>
<keyword id="KW-0025">Alternative splicing</keyword>
<keyword id="KW-1003">Cell membrane</keyword>
<keyword id="KW-0963">Cytoplasm</keyword>
<keyword id="KW-0968">Cytoplasmic vesicle</keyword>
<keyword id="KW-1015">Disulfide bond</keyword>
<keyword id="KW-0278">Fertilization</keyword>
<keyword id="KW-0378">Hydrolase</keyword>
<keyword id="KW-0472">Membrane</keyword>
<keyword id="KW-0479">Metal-binding</keyword>
<keyword id="KW-0482">Metalloprotease</keyword>
<keyword id="KW-0645">Protease</keyword>
<keyword id="KW-1185">Reference proteome</keyword>
<keyword id="KW-0732">Signal</keyword>
<keyword id="KW-0862">Zinc</keyword>
<keyword id="KW-0865">Zymogen</keyword>
<dbReference type="EC" id="3.4.-.-"/>
<dbReference type="EMBL" id="FJ187790">
    <property type="protein sequence ID" value="ACN71160.1"/>
    <property type="molecule type" value="mRNA"/>
</dbReference>
<dbReference type="EMBL" id="FJ187791">
    <property type="protein sequence ID" value="ACN71161.1"/>
    <property type="molecule type" value="mRNA"/>
</dbReference>
<dbReference type="EMBL" id="FJ187792">
    <property type="protein sequence ID" value="ACN71162.1"/>
    <property type="molecule type" value="mRNA"/>
</dbReference>
<dbReference type="EMBL" id="FJ187793">
    <property type="protein sequence ID" value="ACN71163.1"/>
    <property type="molecule type" value="mRNA"/>
</dbReference>
<dbReference type="EMBL" id="FJ187794">
    <property type="protein sequence ID" value="ACN71164.1"/>
    <property type="molecule type" value="mRNA"/>
</dbReference>
<dbReference type="EMBL" id="FJ187795">
    <property type="protein sequence ID" value="ACN71165.1"/>
    <property type="molecule type" value="mRNA"/>
</dbReference>
<dbReference type="EMBL" id="AK033037">
    <property type="protein sequence ID" value="BAC28134.1"/>
    <property type="molecule type" value="mRNA"/>
</dbReference>
<dbReference type="EMBL" id="AL731836">
    <property type="status" value="NOT_ANNOTATED_CDS"/>
    <property type="molecule type" value="Genomic_DNA"/>
</dbReference>
<dbReference type="EMBL" id="AL845368">
    <property type="status" value="NOT_ANNOTATED_CDS"/>
    <property type="molecule type" value="Genomic_DNA"/>
</dbReference>
<dbReference type="EMBL" id="BC064729">
    <property type="protein sequence ID" value="AAH64729.2"/>
    <property type="molecule type" value="mRNA"/>
</dbReference>
<dbReference type="EMBL" id="AJ537599">
    <property type="protein sequence ID" value="CAD61264.2"/>
    <property type="molecule type" value="mRNA"/>
</dbReference>
<dbReference type="CCDS" id="CCDS16700.1">
    <molecule id="Q6HA09-2"/>
</dbReference>
<dbReference type="CCDS" id="CCDS71138.1">
    <molecule id="Q6HA09-1"/>
</dbReference>
<dbReference type="RefSeq" id="NP_001277932.1">
    <molecule id="Q6HA09-1"/>
    <property type="nucleotide sequence ID" value="NM_001291003.1"/>
</dbReference>
<dbReference type="RefSeq" id="NP_766127.1">
    <molecule id="Q6HA09-2"/>
    <property type="nucleotide sequence ID" value="NM_172539.3"/>
</dbReference>
<dbReference type="SMR" id="Q6HA09"/>
<dbReference type="FunCoup" id="Q6HA09">
    <property type="interactions" value="232"/>
</dbReference>
<dbReference type="STRING" id="10090.ENSMUSP00000087102"/>
<dbReference type="MEROPS" id="M12.245"/>
<dbReference type="iPTMnet" id="Q6HA09"/>
<dbReference type="PhosphoSitePlus" id="Q6HA09"/>
<dbReference type="PaxDb" id="10090-ENSMUSP00000054456"/>
<dbReference type="ProteomicsDB" id="281855">
    <molecule id="Q6HA09-1"/>
</dbReference>
<dbReference type="ProteomicsDB" id="281856">
    <molecule id="Q6HA09-2"/>
</dbReference>
<dbReference type="ProteomicsDB" id="281857">
    <molecule id="Q6HA09-3"/>
</dbReference>
<dbReference type="ProteomicsDB" id="281858">
    <molecule id="Q6HA09-4"/>
</dbReference>
<dbReference type="ProteomicsDB" id="281859">
    <molecule id="Q6HA09-5"/>
</dbReference>
<dbReference type="ProteomicsDB" id="281860">
    <molecule id="Q6HA09-6"/>
</dbReference>
<dbReference type="Antibodypedia" id="2745">
    <property type="antibodies" value="110 antibodies from 18 providers"/>
</dbReference>
<dbReference type="DNASU" id="215095"/>
<dbReference type="Ensembl" id="ENSMUST00000059839.9">
    <molecule id="Q6HA09-2"/>
    <property type="protein sequence ID" value="ENSMUSP00000054456.3"/>
    <property type="gene ID" value="ENSMUSG00000050468.13"/>
</dbReference>
<dbReference type="Ensembl" id="ENSMUST00000089673.10">
    <molecule id="Q6HA09-1"/>
    <property type="protein sequence ID" value="ENSMUSP00000087102.4"/>
    <property type="gene ID" value="ENSMUSG00000050468.13"/>
</dbReference>
<dbReference type="Ensembl" id="ENSMUST00000179618.8">
    <molecule id="Q6HA09-2"/>
    <property type="protein sequence ID" value="ENSMUSP00000135987.2"/>
    <property type="gene ID" value="ENSMUSG00000050468.13"/>
</dbReference>
<dbReference type="GeneID" id="215095"/>
<dbReference type="KEGG" id="mmu:215095"/>
<dbReference type="UCSC" id="uc008mfg.2">
    <molecule id="Q6HA09-1"/>
    <property type="organism name" value="mouse"/>
</dbReference>
<dbReference type="UCSC" id="uc029uen.2">
    <molecule id="Q6HA09-3"/>
    <property type="organism name" value="mouse"/>
</dbReference>
<dbReference type="AGR" id="MGI:3046414"/>
<dbReference type="CTD" id="431705"/>
<dbReference type="MGI" id="MGI:3046414">
    <property type="gene designation" value="Astl"/>
</dbReference>
<dbReference type="VEuPathDB" id="HostDB:ENSMUSG00000050468"/>
<dbReference type="eggNOG" id="KOG3714">
    <property type="taxonomic scope" value="Eukaryota"/>
</dbReference>
<dbReference type="GeneTree" id="ENSGT00940000154856"/>
<dbReference type="HOGENOM" id="CLU_640213_0_0_1"/>
<dbReference type="InParanoid" id="Q6HA09"/>
<dbReference type="OMA" id="WESPVLK"/>
<dbReference type="OrthoDB" id="291007at2759"/>
<dbReference type="PhylomeDB" id="Q6HA09"/>
<dbReference type="TreeFam" id="TF315280"/>
<dbReference type="BioGRID-ORCS" id="215095">
    <property type="hits" value="2 hits in 77 CRISPR screens"/>
</dbReference>
<dbReference type="PRO" id="PR:Q6HA09"/>
<dbReference type="Proteomes" id="UP000000589">
    <property type="component" value="Chromosome 2"/>
</dbReference>
<dbReference type="RNAct" id="Q6HA09">
    <property type="molecule type" value="protein"/>
</dbReference>
<dbReference type="Bgee" id="ENSMUSG00000050468">
    <property type="expression patterns" value="Expressed in primary oocyte and 9 other cell types or tissues"/>
</dbReference>
<dbReference type="ExpressionAtlas" id="Q6HA09">
    <property type="expression patterns" value="baseline and differential"/>
</dbReference>
<dbReference type="GO" id="GO:0060473">
    <property type="term" value="C:cortical granule"/>
    <property type="evidence" value="ECO:0000314"/>
    <property type="project" value="UniProtKB"/>
</dbReference>
<dbReference type="GO" id="GO:0005737">
    <property type="term" value="C:cytoplasm"/>
    <property type="evidence" value="ECO:0000314"/>
    <property type="project" value="UniProtKB"/>
</dbReference>
<dbReference type="GO" id="GO:0005886">
    <property type="term" value="C:plasma membrane"/>
    <property type="evidence" value="ECO:0000314"/>
    <property type="project" value="UniProtKB"/>
</dbReference>
<dbReference type="GO" id="GO:0070001">
    <property type="term" value="F:aspartic-type peptidase activity"/>
    <property type="evidence" value="ECO:0000314"/>
    <property type="project" value="UniProtKB"/>
</dbReference>
<dbReference type="GO" id="GO:0070002">
    <property type="term" value="F:glutamic-type peptidase activity"/>
    <property type="evidence" value="ECO:0000314"/>
    <property type="project" value="UniProtKB"/>
</dbReference>
<dbReference type="GO" id="GO:0004222">
    <property type="term" value="F:metalloendopeptidase activity"/>
    <property type="evidence" value="ECO:0000250"/>
    <property type="project" value="UniProtKB"/>
</dbReference>
<dbReference type="GO" id="GO:0008233">
    <property type="term" value="F:peptidase activity"/>
    <property type="evidence" value="ECO:0000314"/>
    <property type="project" value="UniProtKB"/>
</dbReference>
<dbReference type="GO" id="GO:0008270">
    <property type="term" value="F:zinc ion binding"/>
    <property type="evidence" value="ECO:0007669"/>
    <property type="project" value="InterPro"/>
</dbReference>
<dbReference type="GO" id="GO:0007155">
    <property type="term" value="P:cell adhesion"/>
    <property type="evidence" value="ECO:0000315"/>
    <property type="project" value="UniProtKB"/>
</dbReference>
<dbReference type="GO" id="GO:0009566">
    <property type="term" value="P:fertilization"/>
    <property type="evidence" value="ECO:0000315"/>
    <property type="project" value="UniProtKB"/>
</dbReference>
<dbReference type="GO" id="GO:2000360">
    <property type="term" value="P:negative regulation of binding of sperm to zona pellucida"/>
    <property type="evidence" value="ECO:0000314"/>
    <property type="project" value="UniProtKB"/>
</dbReference>
<dbReference type="GO" id="GO:0010954">
    <property type="term" value="P:positive regulation of protein processing"/>
    <property type="evidence" value="ECO:0000314"/>
    <property type="project" value="UniProtKB"/>
</dbReference>
<dbReference type="GO" id="GO:0060468">
    <property type="term" value="P:prevention of polyspermy"/>
    <property type="evidence" value="ECO:0000314"/>
    <property type="project" value="UniProtKB"/>
</dbReference>
<dbReference type="GO" id="GO:0006508">
    <property type="term" value="P:proteolysis"/>
    <property type="evidence" value="ECO:0007669"/>
    <property type="project" value="UniProtKB-KW"/>
</dbReference>
<dbReference type="FunFam" id="3.40.390.10:FF:000036">
    <property type="entry name" value="Metalloendopeptidase"/>
    <property type="match status" value="1"/>
</dbReference>
<dbReference type="Gene3D" id="3.40.390.10">
    <property type="entry name" value="Collagenase (Catalytic Domain)"/>
    <property type="match status" value="1"/>
</dbReference>
<dbReference type="InterPro" id="IPR024079">
    <property type="entry name" value="MetalloPept_cat_dom_sf"/>
</dbReference>
<dbReference type="InterPro" id="IPR001506">
    <property type="entry name" value="Peptidase_M12A"/>
</dbReference>
<dbReference type="InterPro" id="IPR006026">
    <property type="entry name" value="Peptidase_Metallo"/>
</dbReference>
<dbReference type="PANTHER" id="PTHR10127:SF855">
    <property type="entry name" value="ASTACIN-LIKE METALLOENDOPEPTIDASE"/>
    <property type="match status" value="1"/>
</dbReference>
<dbReference type="PANTHER" id="PTHR10127">
    <property type="entry name" value="DISCOIDIN, CUB, EGF, LAMININ , AND ZINC METALLOPROTEASE DOMAIN CONTAINING"/>
    <property type="match status" value="1"/>
</dbReference>
<dbReference type="Pfam" id="PF01400">
    <property type="entry name" value="Astacin"/>
    <property type="match status" value="1"/>
</dbReference>
<dbReference type="PRINTS" id="PR00480">
    <property type="entry name" value="ASTACIN"/>
</dbReference>
<dbReference type="SMART" id="SM00235">
    <property type="entry name" value="ZnMc"/>
    <property type="match status" value="1"/>
</dbReference>
<dbReference type="SUPFAM" id="SSF55486">
    <property type="entry name" value="Metalloproteases ('zincins'), catalytic domain"/>
    <property type="match status" value="1"/>
</dbReference>
<dbReference type="PROSITE" id="PS51864">
    <property type="entry name" value="ASTACIN"/>
    <property type="match status" value="1"/>
</dbReference>
<dbReference type="PROSITE" id="PS00142">
    <property type="entry name" value="ZINC_PROTEASE"/>
    <property type="match status" value="1"/>
</dbReference>
<protein>
    <recommendedName>
        <fullName evidence="10">Astacin-like metalloendopeptidase</fullName>
        <ecNumber>3.4.-.-</ecNumber>
    </recommendedName>
    <alternativeName>
        <fullName>Oocyte astacin</fullName>
    </alternativeName>
    <alternativeName>
        <fullName>Ovastacin</fullName>
    </alternativeName>
    <alternativeName>
        <fullName>Sperm acrosomal SLLP1-binding protein</fullName>
    </alternativeName>
</protein>
<sequence length="435" mass="47455">MGIMGSLWPWILTMLSLLGLSMGAPSASRCSGVCSTSVPEGFTPEGSPVFQDKDIPAINQGLISEETPESSFLVEGDIIRPSPFRLLSVTNNKWPKGVGGFVEIPFLLSRKYDELSRRVIMDAFAEFERFTCIRFVAYHGQRDFVSILPMAGCFSGVGRSGGMQVVSLAPTCLRKGRGIVLHELMHVLGFWHEHSRADRDRYIQVNWNEILPGFEINFIKSRSTNMLVPYDYSSVMHYGRFAFSWRGQPTIIPLWTSSVHIGQRWNLSTSDITRVCRLYNCSRSVPDSHGRGFEAQSDGSSLTPASISRLQRLLEALSEESGSSAPSGSRTGGQSIAGLGNSQQGWEHPPQSTFSVGALARPPQMLADASKSGPGAGADSLSLEQFQLAQAPTVPLALFPEARDKPAPIQDAFERLAPLPGGCAPGSHIREVPRD</sequence>
<name>ASTL_MOUSE</name>
<reference key="1">
    <citation type="journal article" date="2012" name="Dev. Biol.">
        <title>Oocyte specific oolemmal SAS1B involved in sperm binding through intra-acrosomal SLLP1 during fertilization.</title>
        <authorList>
            <person name="Sachdev M."/>
            <person name="Mandal A."/>
            <person name="Mulders S."/>
            <person name="Digilio L.C."/>
            <person name="Panneerdoss S."/>
            <person name="Suryavathi V."/>
            <person name="Pires E."/>
            <person name="Klotz K.L."/>
            <person name="Hermens L."/>
            <person name="Herrero M.B."/>
            <person name="Flickinger C.J."/>
            <person name="van Duin M."/>
            <person name="Herr J.C."/>
        </authorList>
    </citation>
    <scope>NUCLEOTIDE SEQUENCE [MRNA] (ISOFORMS 1; 2; 3; 4; 5 AND 6)</scope>
    <scope>FUNCTION IN FERTILIZATION</scope>
    <scope>TOPOLOGY</scope>
    <scope>ENZYME ACTIVITY</scope>
    <scope>INTERACTION WITH SPACA3</scope>
    <scope>SUBCELLULAR LOCATION</scope>
    <scope>TISSUE SPECIFICITY</scope>
    <scope>DISRUPTION PHENOTYPE</scope>
    <scope>IDENTIFICATION BY MASS SPECTROMETRY</scope>
    <source>
        <strain>Swiss Webster</strain>
        <tissue>Ovary</tissue>
    </source>
</reference>
<reference key="2">
    <citation type="journal article" date="2005" name="Science">
        <title>The transcriptional landscape of the mammalian genome.</title>
        <authorList>
            <person name="Carninci P."/>
            <person name="Kasukawa T."/>
            <person name="Katayama S."/>
            <person name="Gough J."/>
            <person name="Frith M.C."/>
            <person name="Maeda N."/>
            <person name="Oyama R."/>
            <person name="Ravasi T."/>
            <person name="Lenhard B."/>
            <person name="Wells C."/>
            <person name="Kodzius R."/>
            <person name="Shimokawa K."/>
            <person name="Bajic V.B."/>
            <person name="Brenner S.E."/>
            <person name="Batalov S."/>
            <person name="Forrest A.R."/>
            <person name="Zavolan M."/>
            <person name="Davis M.J."/>
            <person name="Wilming L.G."/>
            <person name="Aidinis V."/>
            <person name="Allen J.E."/>
            <person name="Ambesi-Impiombato A."/>
            <person name="Apweiler R."/>
            <person name="Aturaliya R.N."/>
            <person name="Bailey T.L."/>
            <person name="Bansal M."/>
            <person name="Baxter L."/>
            <person name="Beisel K.W."/>
            <person name="Bersano T."/>
            <person name="Bono H."/>
            <person name="Chalk A.M."/>
            <person name="Chiu K.P."/>
            <person name="Choudhary V."/>
            <person name="Christoffels A."/>
            <person name="Clutterbuck D.R."/>
            <person name="Crowe M.L."/>
            <person name="Dalla E."/>
            <person name="Dalrymple B.P."/>
            <person name="de Bono B."/>
            <person name="Della Gatta G."/>
            <person name="di Bernardo D."/>
            <person name="Down T."/>
            <person name="Engstrom P."/>
            <person name="Fagiolini M."/>
            <person name="Faulkner G."/>
            <person name="Fletcher C.F."/>
            <person name="Fukushima T."/>
            <person name="Furuno M."/>
            <person name="Futaki S."/>
            <person name="Gariboldi M."/>
            <person name="Georgii-Hemming P."/>
            <person name="Gingeras T.R."/>
            <person name="Gojobori T."/>
            <person name="Green R.E."/>
            <person name="Gustincich S."/>
            <person name="Harbers M."/>
            <person name="Hayashi Y."/>
            <person name="Hensch T.K."/>
            <person name="Hirokawa N."/>
            <person name="Hill D."/>
            <person name="Huminiecki L."/>
            <person name="Iacono M."/>
            <person name="Ikeo K."/>
            <person name="Iwama A."/>
            <person name="Ishikawa T."/>
            <person name="Jakt M."/>
            <person name="Kanapin A."/>
            <person name="Katoh M."/>
            <person name="Kawasawa Y."/>
            <person name="Kelso J."/>
            <person name="Kitamura H."/>
            <person name="Kitano H."/>
            <person name="Kollias G."/>
            <person name="Krishnan S.P."/>
            <person name="Kruger A."/>
            <person name="Kummerfeld S.K."/>
            <person name="Kurochkin I.V."/>
            <person name="Lareau L.F."/>
            <person name="Lazarevic D."/>
            <person name="Lipovich L."/>
            <person name="Liu J."/>
            <person name="Liuni S."/>
            <person name="McWilliam S."/>
            <person name="Madan Babu M."/>
            <person name="Madera M."/>
            <person name="Marchionni L."/>
            <person name="Matsuda H."/>
            <person name="Matsuzawa S."/>
            <person name="Miki H."/>
            <person name="Mignone F."/>
            <person name="Miyake S."/>
            <person name="Morris K."/>
            <person name="Mottagui-Tabar S."/>
            <person name="Mulder N."/>
            <person name="Nakano N."/>
            <person name="Nakauchi H."/>
            <person name="Ng P."/>
            <person name="Nilsson R."/>
            <person name="Nishiguchi S."/>
            <person name="Nishikawa S."/>
            <person name="Nori F."/>
            <person name="Ohara O."/>
            <person name="Okazaki Y."/>
            <person name="Orlando V."/>
            <person name="Pang K.C."/>
            <person name="Pavan W.J."/>
            <person name="Pavesi G."/>
            <person name="Pesole G."/>
            <person name="Petrovsky N."/>
            <person name="Piazza S."/>
            <person name="Reed J."/>
            <person name="Reid J.F."/>
            <person name="Ring B.Z."/>
            <person name="Ringwald M."/>
            <person name="Rost B."/>
            <person name="Ruan Y."/>
            <person name="Salzberg S.L."/>
            <person name="Sandelin A."/>
            <person name="Schneider C."/>
            <person name="Schoenbach C."/>
            <person name="Sekiguchi K."/>
            <person name="Semple C.A."/>
            <person name="Seno S."/>
            <person name="Sessa L."/>
            <person name="Sheng Y."/>
            <person name="Shibata Y."/>
            <person name="Shimada H."/>
            <person name="Shimada K."/>
            <person name="Silva D."/>
            <person name="Sinclair B."/>
            <person name="Sperling S."/>
            <person name="Stupka E."/>
            <person name="Sugiura K."/>
            <person name="Sultana R."/>
            <person name="Takenaka Y."/>
            <person name="Taki K."/>
            <person name="Tammoja K."/>
            <person name="Tan S.L."/>
            <person name="Tang S."/>
            <person name="Taylor M.S."/>
            <person name="Tegner J."/>
            <person name="Teichmann S.A."/>
            <person name="Ueda H.R."/>
            <person name="van Nimwegen E."/>
            <person name="Verardo R."/>
            <person name="Wei C.L."/>
            <person name="Yagi K."/>
            <person name="Yamanishi H."/>
            <person name="Zabarovsky E."/>
            <person name="Zhu S."/>
            <person name="Zimmer A."/>
            <person name="Hide W."/>
            <person name="Bult C."/>
            <person name="Grimmond S.M."/>
            <person name="Teasdale R.D."/>
            <person name="Liu E.T."/>
            <person name="Brusic V."/>
            <person name="Quackenbush J."/>
            <person name="Wahlestedt C."/>
            <person name="Mattick J.S."/>
            <person name="Hume D.A."/>
            <person name="Kai C."/>
            <person name="Sasaki D."/>
            <person name="Tomaru Y."/>
            <person name="Fukuda S."/>
            <person name="Kanamori-Katayama M."/>
            <person name="Suzuki M."/>
            <person name="Aoki J."/>
            <person name="Arakawa T."/>
            <person name="Iida J."/>
            <person name="Imamura K."/>
            <person name="Itoh M."/>
            <person name="Kato T."/>
            <person name="Kawaji H."/>
            <person name="Kawagashira N."/>
            <person name="Kawashima T."/>
            <person name="Kojima M."/>
            <person name="Kondo S."/>
            <person name="Konno H."/>
            <person name="Nakano K."/>
            <person name="Ninomiya N."/>
            <person name="Nishio T."/>
            <person name="Okada M."/>
            <person name="Plessy C."/>
            <person name="Shibata K."/>
            <person name="Shiraki T."/>
            <person name="Suzuki S."/>
            <person name="Tagami M."/>
            <person name="Waki K."/>
            <person name="Watahiki A."/>
            <person name="Okamura-Oho Y."/>
            <person name="Suzuki H."/>
            <person name="Kawai J."/>
            <person name="Hayashizaki Y."/>
        </authorList>
    </citation>
    <scope>NUCLEOTIDE SEQUENCE [LARGE SCALE MRNA] (ISOFORM 2)</scope>
    <source>
        <strain>C57BL/6J</strain>
        <tissue>Egg</tissue>
    </source>
</reference>
<reference key="3">
    <citation type="journal article" date="2009" name="PLoS Biol.">
        <title>Lineage-specific biology revealed by a finished genome assembly of the mouse.</title>
        <authorList>
            <person name="Church D.M."/>
            <person name="Goodstadt L."/>
            <person name="Hillier L.W."/>
            <person name="Zody M.C."/>
            <person name="Goldstein S."/>
            <person name="She X."/>
            <person name="Bult C.J."/>
            <person name="Agarwala R."/>
            <person name="Cherry J.L."/>
            <person name="DiCuccio M."/>
            <person name="Hlavina W."/>
            <person name="Kapustin Y."/>
            <person name="Meric P."/>
            <person name="Maglott D."/>
            <person name="Birtle Z."/>
            <person name="Marques A.C."/>
            <person name="Graves T."/>
            <person name="Zhou S."/>
            <person name="Teague B."/>
            <person name="Potamousis K."/>
            <person name="Churas C."/>
            <person name="Place M."/>
            <person name="Herschleb J."/>
            <person name="Runnheim R."/>
            <person name="Forrest D."/>
            <person name="Amos-Landgraf J."/>
            <person name="Schwartz D.C."/>
            <person name="Cheng Z."/>
            <person name="Lindblad-Toh K."/>
            <person name="Eichler E.E."/>
            <person name="Ponting C.P."/>
        </authorList>
    </citation>
    <scope>NUCLEOTIDE SEQUENCE [LARGE SCALE GENOMIC DNA]</scope>
    <source>
        <strain>C57BL/6J</strain>
    </source>
</reference>
<reference evidence="10" key="4">
    <citation type="journal article" date="2004" name="Genome Res.">
        <title>The status, quality, and expansion of the NIH full-length cDNA project: the Mammalian Gene Collection (MGC).</title>
        <authorList>
            <consortium name="The MGC Project Team"/>
        </authorList>
    </citation>
    <scope>NUCLEOTIDE SEQUENCE [LARGE SCALE MRNA] (ISOFORM 1)</scope>
    <source>
        <strain>C57BL/6J</strain>
        <tissue>Egg</tissue>
    </source>
</reference>
<reference key="5">
    <citation type="journal article" date="2004" name="J. Biol. Chem.">
        <title>Identification and characterization of human and mouse ovastacin, a novel metalloproteinase similar to hatching enzymes from arthropods, birds, amphibians, and fish.</title>
        <authorList>
            <person name="Quesada V."/>
            <person name="Sanchez J."/>
            <person name="Alvarez J."/>
            <person name="Lopez-Otin C."/>
        </authorList>
    </citation>
    <scope>RETRACTED PAPER</scope>
</reference>
<reference key="6">
    <citation type="journal article" date="2019" name="J. Biol. Chem.">
        <title>Withdrawal: Identification and characterization of human and mouse ovastacin: A novel metalloproteinase similar to hatching enzymes from arthropods, birds, amphibians, and fish.</title>
        <authorList>
            <person name="Quesada V."/>
            <person name="Sanchez L.M."/>
            <person name="Alvarez J."/>
            <person name="Lopez-Otin C."/>
        </authorList>
    </citation>
    <scope>RETRACTION NOTICE OF PUBMED:15087446</scope>
</reference>
<reference key="7">
    <citation type="journal article" date="2012" name="Dev. Dyn.">
        <title>Astacin-like metallo-endopeptidase is dynamically expressed in embryonic stem cells and embryonic epithelium during morphogenesis.</title>
        <authorList>
            <person name="Acloque H."/>
            <person name="Lavial F."/>
            <person name="Pain B."/>
        </authorList>
    </citation>
    <scope>DEVELOPMENTAL STAGE</scope>
</reference>
<reference key="8">
    <citation type="journal article" date="2012" name="J. Cell Biol.">
        <title>Ovastacin, a cortical granule protease, cleaves ZP2 in the zona pellucida to prevent polyspermy.</title>
        <authorList>
            <person name="Burkart A.D."/>
            <person name="Xiong B."/>
            <person name="Baibakov B."/>
            <person name="Jimenez-Movilla M."/>
            <person name="Dean J."/>
        </authorList>
    </citation>
    <scope>FUNCTION IN POLYSPERMY INHIBITION</scope>
    <scope>CLEAVAGE OF ZP2</scope>
    <scope>SUBCELLULAR LOCATION</scope>
    <scope>DISRUPTION PHENOTYPE</scope>
    <scope>TISSUE SPECIFICITY</scope>
</reference>
<evidence type="ECO:0000250" key="1">
    <source>
        <dbReference type="UniProtKB" id="Q6HA08"/>
    </source>
</evidence>
<evidence type="ECO:0000255" key="2"/>
<evidence type="ECO:0000255" key="3">
    <source>
        <dbReference type="PROSITE-ProRule" id="PRU01211"/>
    </source>
</evidence>
<evidence type="ECO:0000256" key="4">
    <source>
        <dbReference type="SAM" id="MobiDB-lite"/>
    </source>
</evidence>
<evidence type="ECO:0000269" key="5">
    <source>
    </source>
</evidence>
<evidence type="ECO:0000269" key="6">
    <source>
    </source>
</evidence>
<evidence type="ECO:0000269" key="7">
    <source>
    </source>
</evidence>
<evidence type="ECO:0000303" key="8">
    <source>
    </source>
</evidence>
<evidence type="ECO:0000303" key="9">
    <source>
    </source>
</evidence>
<evidence type="ECO:0000305" key="10"/>
<evidence type="ECO:0000312" key="11">
    <source>
        <dbReference type="MGI" id="MGI:3046414"/>
    </source>
</evidence>